<evidence type="ECO:0000255" key="1">
    <source>
        <dbReference type="HAMAP-Rule" id="MF_00213"/>
    </source>
</evidence>
<comment type="function">
    <text evidence="1">Involved in the maturation of [NiFe] hydrogenases. Required for nickel insertion into the metal center of the hydrogenase.</text>
</comment>
<comment type="similarity">
    <text evidence="1">Belongs to the HypA/HybF family.</text>
</comment>
<sequence>MHEMSLCEGILQILEEEARRQMFSRVRTVRLEVGELAGVELDAMYFGFDVVCRDTLADGARLEIVQRPGQAFCLGCGERVAVRRRFDACPDCGSYQLQVIGGDELRIKDLEVD</sequence>
<protein>
    <recommendedName>
        <fullName evidence="1">Hydrogenase maturation factor HypA</fullName>
    </recommendedName>
</protein>
<reference key="1">
    <citation type="submission" date="2006-08" db="EMBL/GenBank/DDBJ databases">
        <title>Complete sequence of Alkalilimnicola ehrilichei MLHE-1.</title>
        <authorList>
            <person name="Copeland A."/>
            <person name="Lucas S."/>
            <person name="Lapidus A."/>
            <person name="Barry K."/>
            <person name="Detter J.C."/>
            <person name="Glavina del Rio T."/>
            <person name="Hammon N."/>
            <person name="Israni S."/>
            <person name="Dalin E."/>
            <person name="Tice H."/>
            <person name="Pitluck S."/>
            <person name="Sims D."/>
            <person name="Brettin T."/>
            <person name="Bruce D."/>
            <person name="Han C."/>
            <person name="Tapia R."/>
            <person name="Gilna P."/>
            <person name="Schmutz J."/>
            <person name="Larimer F."/>
            <person name="Land M."/>
            <person name="Hauser L."/>
            <person name="Kyrpides N."/>
            <person name="Mikhailova N."/>
            <person name="Oremland R.S."/>
            <person name="Hoeft S.E."/>
            <person name="Switzer-Blum J."/>
            <person name="Kulp T."/>
            <person name="King G."/>
            <person name="Tabita R."/>
            <person name="Witte B."/>
            <person name="Santini J.M."/>
            <person name="Basu P."/>
            <person name="Hollibaugh J.T."/>
            <person name="Xie G."/>
            <person name="Stolz J.F."/>
            <person name="Richardson P."/>
        </authorList>
    </citation>
    <scope>NUCLEOTIDE SEQUENCE [LARGE SCALE GENOMIC DNA]</scope>
    <source>
        <strain>ATCC BAA-1101 / DSM 17681 / MLHE-1</strain>
    </source>
</reference>
<dbReference type="EMBL" id="CP000453">
    <property type="protein sequence ID" value="ABI57361.1"/>
    <property type="molecule type" value="Genomic_DNA"/>
</dbReference>
<dbReference type="RefSeq" id="WP_011629755.1">
    <property type="nucleotide sequence ID" value="NC_008340.1"/>
</dbReference>
<dbReference type="SMR" id="Q0A726"/>
<dbReference type="KEGG" id="aeh:Mlg_2019"/>
<dbReference type="eggNOG" id="COG0375">
    <property type="taxonomic scope" value="Bacteria"/>
</dbReference>
<dbReference type="HOGENOM" id="CLU_126929_0_0_6"/>
<dbReference type="OrthoDB" id="288014at2"/>
<dbReference type="Proteomes" id="UP000001962">
    <property type="component" value="Chromosome"/>
</dbReference>
<dbReference type="GO" id="GO:0016151">
    <property type="term" value="F:nickel cation binding"/>
    <property type="evidence" value="ECO:0007669"/>
    <property type="project" value="UniProtKB-UniRule"/>
</dbReference>
<dbReference type="GO" id="GO:0008270">
    <property type="term" value="F:zinc ion binding"/>
    <property type="evidence" value="ECO:0007669"/>
    <property type="project" value="UniProtKB-UniRule"/>
</dbReference>
<dbReference type="GO" id="GO:0051604">
    <property type="term" value="P:protein maturation"/>
    <property type="evidence" value="ECO:0007669"/>
    <property type="project" value="InterPro"/>
</dbReference>
<dbReference type="GO" id="GO:0036211">
    <property type="term" value="P:protein modification process"/>
    <property type="evidence" value="ECO:0007669"/>
    <property type="project" value="UniProtKB-UniRule"/>
</dbReference>
<dbReference type="FunFam" id="3.30.2320.80:FF:000001">
    <property type="entry name" value="Hydrogenase maturation factor HypA"/>
    <property type="match status" value="1"/>
</dbReference>
<dbReference type="Gene3D" id="3.30.2320.80">
    <property type="match status" value="1"/>
</dbReference>
<dbReference type="HAMAP" id="MF_00213">
    <property type="entry name" value="HypA_HybF"/>
    <property type="match status" value="1"/>
</dbReference>
<dbReference type="InterPro" id="IPR000688">
    <property type="entry name" value="HypA/HybF"/>
</dbReference>
<dbReference type="NCBIfam" id="TIGR00100">
    <property type="entry name" value="hypA"/>
    <property type="match status" value="1"/>
</dbReference>
<dbReference type="PANTHER" id="PTHR34535">
    <property type="entry name" value="HYDROGENASE MATURATION FACTOR HYPA"/>
    <property type="match status" value="1"/>
</dbReference>
<dbReference type="PANTHER" id="PTHR34535:SF3">
    <property type="entry name" value="HYDROGENASE MATURATION FACTOR HYPA"/>
    <property type="match status" value="1"/>
</dbReference>
<dbReference type="Pfam" id="PF01155">
    <property type="entry name" value="HypA"/>
    <property type="match status" value="1"/>
</dbReference>
<dbReference type="PIRSF" id="PIRSF004761">
    <property type="entry name" value="Hydrgn_mat_HypA"/>
    <property type="match status" value="1"/>
</dbReference>
<feature type="chain" id="PRO_1000023820" description="Hydrogenase maturation factor HypA">
    <location>
        <begin position="1"/>
        <end position="113"/>
    </location>
</feature>
<feature type="binding site" evidence="1">
    <location>
        <position position="2"/>
    </location>
    <ligand>
        <name>Ni(2+)</name>
        <dbReference type="ChEBI" id="CHEBI:49786"/>
    </ligand>
</feature>
<feature type="binding site" evidence="1">
    <location>
        <position position="73"/>
    </location>
    <ligand>
        <name>Zn(2+)</name>
        <dbReference type="ChEBI" id="CHEBI:29105"/>
    </ligand>
</feature>
<feature type="binding site" evidence="1">
    <location>
        <position position="76"/>
    </location>
    <ligand>
        <name>Zn(2+)</name>
        <dbReference type="ChEBI" id="CHEBI:29105"/>
    </ligand>
</feature>
<feature type="binding site" evidence="1">
    <location>
        <position position="89"/>
    </location>
    <ligand>
        <name>Zn(2+)</name>
        <dbReference type="ChEBI" id="CHEBI:29105"/>
    </ligand>
</feature>
<feature type="binding site" evidence="1">
    <location>
        <position position="92"/>
    </location>
    <ligand>
        <name>Zn(2+)</name>
        <dbReference type="ChEBI" id="CHEBI:29105"/>
    </ligand>
</feature>
<gene>
    <name evidence="1" type="primary">hypA</name>
    <name type="ordered locus">Mlg_2019</name>
</gene>
<proteinExistence type="inferred from homology"/>
<organism>
    <name type="scientific">Alkalilimnicola ehrlichii (strain ATCC BAA-1101 / DSM 17681 / MLHE-1)</name>
    <dbReference type="NCBI Taxonomy" id="187272"/>
    <lineage>
        <taxon>Bacteria</taxon>
        <taxon>Pseudomonadati</taxon>
        <taxon>Pseudomonadota</taxon>
        <taxon>Gammaproteobacteria</taxon>
        <taxon>Chromatiales</taxon>
        <taxon>Ectothiorhodospiraceae</taxon>
        <taxon>Alkalilimnicola</taxon>
    </lineage>
</organism>
<name>HYPA_ALKEH</name>
<keyword id="KW-0479">Metal-binding</keyword>
<keyword id="KW-0533">Nickel</keyword>
<keyword id="KW-1185">Reference proteome</keyword>
<keyword id="KW-0862">Zinc</keyword>
<accession>Q0A726</accession>